<evidence type="ECO:0000255" key="1">
    <source>
        <dbReference type="HAMAP-Rule" id="MF_01849"/>
    </source>
</evidence>
<evidence type="ECO:0000255" key="2">
    <source>
        <dbReference type="PROSITE-ProRule" id="PRU01266"/>
    </source>
</evidence>
<proteinExistence type="inferred from homology"/>
<protein>
    <recommendedName>
        <fullName evidence="1">Probable dual-specificity RNA methyltransferase RlmN</fullName>
        <ecNumber evidence="1">2.1.1.192</ecNumber>
    </recommendedName>
    <alternativeName>
        <fullName evidence="1">23S rRNA (adenine(2503)-C(2))-methyltransferase</fullName>
    </alternativeName>
    <alternativeName>
        <fullName evidence="1">23S rRNA m2A2503 methyltransferase</fullName>
    </alternativeName>
    <alternativeName>
        <fullName evidence="1">Ribosomal RNA large subunit methyltransferase N</fullName>
    </alternativeName>
    <alternativeName>
        <fullName evidence="1">tRNA (adenine(37)-C(2))-methyltransferase</fullName>
    </alternativeName>
    <alternativeName>
        <fullName evidence="1">tRNA m2A37 methyltransferase</fullName>
    </alternativeName>
</protein>
<reference key="1">
    <citation type="journal article" date="2014" name="Stand. Genomic Sci.">
        <title>Complete genome sequence of Anabaena variabilis ATCC 29413.</title>
        <authorList>
            <person name="Thiel T."/>
            <person name="Pratte B.S."/>
            <person name="Zhong J."/>
            <person name="Goodwin L."/>
            <person name="Copeland A."/>
            <person name="Lucas S."/>
            <person name="Han C."/>
            <person name="Pitluck S."/>
            <person name="Land M.L."/>
            <person name="Kyrpides N.C."/>
            <person name="Woyke T."/>
        </authorList>
    </citation>
    <scope>NUCLEOTIDE SEQUENCE [LARGE SCALE GENOMIC DNA]</scope>
    <source>
        <strain>ATCC 29413 / PCC 7937</strain>
    </source>
</reference>
<feature type="chain" id="PRO_0000350013" description="Probable dual-specificity RNA methyltransferase RlmN">
    <location>
        <begin position="1"/>
        <end position="355"/>
    </location>
</feature>
<feature type="domain" description="Radical SAM core" evidence="2">
    <location>
        <begin position="113"/>
        <end position="341"/>
    </location>
</feature>
<feature type="active site" description="Proton acceptor" evidence="1">
    <location>
        <position position="107"/>
    </location>
</feature>
<feature type="active site" description="S-methylcysteine intermediate" evidence="1">
    <location>
        <position position="346"/>
    </location>
</feature>
<feature type="binding site" evidence="1">
    <location>
        <position position="127"/>
    </location>
    <ligand>
        <name>[4Fe-4S] cluster</name>
        <dbReference type="ChEBI" id="CHEBI:49883"/>
        <note>4Fe-4S-S-AdoMet</note>
    </ligand>
</feature>
<feature type="binding site" evidence="1">
    <location>
        <position position="131"/>
    </location>
    <ligand>
        <name>[4Fe-4S] cluster</name>
        <dbReference type="ChEBI" id="CHEBI:49883"/>
        <note>4Fe-4S-S-AdoMet</note>
    </ligand>
</feature>
<feature type="binding site" evidence="1">
    <location>
        <position position="134"/>
    </location>
    <ligand>
        <name>[4Fe-4S] cluster</name>
        <dbReference type="ChEBI" id="CHEBI:49883"/>
        <note>4Fe-4S-S-AdoMet</note>
    </ligand>
</feature>
<feature type="binding site" evidence="1">
    <location>
        <begin position="174"/>
        <end position="175"/>
    </location>
    <ligand>
        <name>S-adenosyl-L-methionine</name>
        <dbReference type="ChEBI" id="CHEBI:59789"/>
    </ligand>
</feature>
<feature type="binding site" evidence="1">
    <location>
        <position position="204"/>
    </location>
    <ligand>
        <name>S-adenosyl-L-methionine</name>
        <dbReference type="ChEBI" id="CHEBI:59789"/>
    </ligand>
</feature>
<feature type="binding site" evidence="1">
    <location>
        <begin position="227"/>
        <end position="229"/>
    </location>
    <ligand>
        <name>S-adenosyl-L-methionine</name>
        <dbReference type="ChEBI" id="CHEBI:59789"/>
    </ligand>
</feature>
<feature type="binding site" evidence="1">
    <location>
        <position position="303"/>
    </location>
    <ligand>
        <name>S-adenosyl-L-methionine</name>
        <dbReference type="ChEBI" id="CHEBI:59789"/>
    </ligand>
</feature>
<feature type="disulfide bond" description="(transient)" evidence="1">
    <location>
        <begin position="120"/>
        <end position="346"/>
    </location>
</feature>
<keyword id="KW-0004">4Fe-4S</keyword>
<keyword id="KW-0963">Cytoplasm</keyword>
<keyword id="KW-1015">Disulfide bond</keyword>
<keyword id="KW-0408">Iron</keyword>
<keyword id="KW-0411">Iron-sulfur</keyword>
<keyword id="KW-0479">Metal-binding</keyword>
<keyword id="KW-0489">Methyltransferase</keyword>
<keyword id="KW-0698">rRNA processing</keyword>
<keyword id="KW-0949">S-adenosyl-L-methionine</keyword>
<keyword id="KW-0808">Transferase</keyword>
<keyword id="KW-0819">tRNA processing</keyword>
<name>RLMN_TRIV2</name>
<comment type="function">
    <text evidence="1">Specifically methylates position 2 of adenine 2503 in 23S rRNA and position 2 of adenine 37 in tRNAs.</text>
</comment>
<comment type="catalytic activity">
    <reaction evidence="1">
        <text>adenosine(2503) in 23S rRNA + 2 reduced [2Fe-2S]-[ferredoxin] + 2 S-adenosyl-L-methionine = 2-methyladenosine(2503) in 23S rRNA + 5'-deoxyadenosine + L-methionine + 2 oxidized [2Fe-2S]-[ferredoxin] + S-adenosyl-L-homocysteine</text>
        <dbReference type="Rhea" id="RHEA:42916"/>
        <dbReference type="Rhea" id="RHEA-COMP:10000"/>
        <dbReference type="Rhea" id="RHEA-COMP:10001"/>
        <dbReference type="Rhea" id="RHEA-COMP:10152"/>
        <dbReference type="Rhea" id="RHEA-COMP:10282"/>
        <dbReference type="ChEBI" id="CHEBI:17319"/>
        <dbReference type="ChEBI" id="CHEBI:33737"/>
        <dbReference type="ChEBI" id="CHEBI:33738"/>
        <dbReference type="ChEBI" id="CHEBI:57844"/>
        <dbReference type="ChEBI" id="CHEBI:57856"/>
        <dbReference type="ChEBI" id="CHEBI:59789"/>
        <dbReference type="ChEBI" id="CHEBI:74411"/>
        <dbReference type="ChEBI" id="CHEBI:74497"/>
        <dbReference type="EC" id="2.1.1.192"/>
    </reaction>
</comment>
<comment type="catalytic activity">
    <reaction evidence="1">
        <text>adenosine(37) in tRNA + 2 reduced [2Fe-2S]-[ferredoxin] + 2 S-adenosyl-L-methionine = 2-methyladenosine(37) in tRNA + 5'-deoxyadenosine + L-methionine + 2 oxidized [2Fe-2S]-[ferredoxin] + S-adenosyl-L-homocysteine</text>
        <dbReference type="Rhea" id="RHEA:43332"/>
        <dbReference type="Rhea" id="RHEA-COMP:10000"/>
        <dbReference type="Rhea" id="RHEA-COMP:10001"/>
        <dbReference type="Rhea" id="RHEA-COMP:10162"/>
        <dbReference type="Rhea" id="RHEA-COMP:10485"/>
        <dbReference type="ChEBI" id="CHEBI:17319"/>
        <dbReference type="ChEBI" id="CHEBI:33737"/>
        <dbReference type="ChEBI" id="CHEBI:33738"/>
        <dbReference type="ChEBI" id="CHEBI:57844"/>
        <dbReference type="ChEBI" id="CHEBI:57856"/>
        <dbReference type="ChEBI" id="CHEBI:59789"/>
        <dbReference type="ChEBI" id="CHEBI:74411"/>
        <dbReference type="ChEBI" id="CHEBI:74497"/>
        <dbReference type="EC" id="2.1.1.192"/>
    </reaction>
</comment>
<comment type="cofactor">
    <cofactor evidence="1">
        <name>[4Fe-4S] cluster</name>
        <dbReference type="ChEBI" id="CHEBI:49883"/>
    </cofactor>
    <text evidence="1">Binds 1 [4Fe-4S] cluster. The cluster is coordinated with 3 cysteines and an exchangeable S-adenosyl-L-methionine.</text>
</comment>
<comment type="subcellular location">
    <subcellularLocation>
        <location evidence="1">Cytoplasm</location>
    </subcellularLocation>
</comment>
<comment type="miscellaneous">
    <text evidence="1">Reaction proceeds by a ping-pong mechanism involving intermediate methylation of a conserved cysteine residue.</text>
</comment>
<comment type="similarity">
    <text evidence="1">Belongs to the radical SAM superfamily. RlmN family.</text>
</comment>
<organism>
    <name type="scientific">Trichormus variabilis (strain ATCC 29413 / PCC 7937)</name>
    <name type="common">Anabaena variabilis</name>
    <dbReference type="NCBI Taxonomy" id="240292"/>
    <lineage>
        <taxon>Bacteria</taxon>
        <taxon>Bacillati</taxon>
        <taxon>Cyanobacteriota</taxon>
        <taxon>Cyanophyceae</taxon>
        <taxon>Nostocales</taxon>
        <taxon>Nostocaceae</taxon>
        <taxon>Trichormus</taxon>
    </lineage>
</organism>
<accession>Q3M9B9</accession>
<dbReference type="EC" id="2.1.1.192" evidence="1"/>
<dbReference type="EMBL" id="CP000117">
    <property type="protein sequence ID" value="ABA22417.1"/>
    <property type="molecule type" value="Genomic_DNA"/>
</dbReference>
<dbReference type="SMR" id="Q3M9B9"/>
<dbReference type="STRING" id="240292.Ava_2804"/>
<dbReference type="KEGG" id="ava:Ava_2804"/>
<dbReference type="eggNOG" id="COG0820">
    <property type="taxonomic scope" value="Bacteria"/>
</dbReference>
<dbReference type="HOGENOM" id="CLU_029101_1_1_3"/>
<dbReference type="Proteomes" id="UP000002533">
    <property type="component" value="Chromosome"/>
</dbReference>
<dbReference type="GO" id="GO:0005737">
    <property type="term" value="C:cytoplasm"/>
    <property type="evidence" value="ECO:0007669"/>
    <property type="project" value="UniProtKB-SubCell"/>
</dbReference>
<dbReference type="GO" id="GO:0051539">
    <property type="term" value="F:4 iron, 4 sulfur cluster binding"/>
    <property type="evidence" value="ECO:0007669"/>
    <property type="project" value="UniProtKB-UniRule"/>
</dbReference>
<dbReference type="GO" id="GO:0046872">
    <property type="term" value="F:metal ion binding"/>
    <property type="evidence" value="ECO:0007669"/>
    <property type="project" value="UniProtKB-KW"/>
</dbReference>
<dbReference type="GO" id="GO:0070040">
    <property type="term" value="F:rRNA (adenine(2503)-C2-)-methyltransferase activity"/>
    <property type="evidence" value="ECO:0007669"/>
    <property type="project" value="UniProtKB-UniRule"/>
</dbReference>
<dbReference type="GO" id="GO:0019843">
    <property type="term" value="F:rRNA binding"/>
    <property type="evidence" value="ECO:0007669"/>
    <property type="project" value="UniProtKB-UniRule"/>
</dbReference>
<dbReference type="GO" id="GO:0002935">
    <property type="term" value="F:tRNA (adenine(37)-C2)-methyltransferase activity"/>
    <property type="evidence" value="ECO:0007669"/>
    <property type="project" value="UniProtKB-UniRule"/>
</dbReference>
<dbReference type="GO" id="GO:0000049">
    <property type="term" value="F:tRNA binding"/>
    <property type="evidence" value="ECO:0007669"/>
    <property type="project" value="UniProtKB-UniRule"/>
</dbReference>
<dbReference type="GO" id="GO:0070475">
    <property type="term" value="P:rRNA base methylation"/>
    <property type="evidence" value="ECO:0007669"/>
    <property type="project" value="UniProtKB-UniRule"/>
</dbReference>
<dbReference type="GO" id="GO:0030488">
    <property type="term" value="P:tRNA methylation"/>
    <property type="evidence" value="ECO:0007669"/>
    <property type="project" value="UniProtKB-UniRule"/>
</dbReference>
<dbReference type="CDD" id="cd01335">
    <property type="entry name" value="Radical_SAM"/>
    <property type="match status" value="1"/>
</dbReference>
<dbReference type="FunFam" id="3.20.20.70:FF:000014">
    <property type="entry name" value="Probable dual-specificity RNA methyltransferase RlmN"/>
    <property type="match status" value="1"/>
</dbReference>
<dbReference type="Gene3D" id="1.10.150.530">
    <property type="match status" value="1"/>
</dbReference>
<dbReference type="Gene3D" id="3.20.20.70">
    <property type="entry name" value="Aldolase class I"/>
    <property type="match status" value="1"/>
</dbReference>
<dbReference type="HAMAP" id="MF_01849">
    <property type="entry name" value="RNA_methyltr_RlmN"/>
    <property type="match status" value="1"/>
</dbReference>
<dbReference type="InterPro" id="IPR013785">
    <property type="entry name" value="Aldolase_TIM"/>
</dbReference>
<dbReference type="InterPro" id="IPR040072">
    <property type="entry name" value="Methyltransferase_A"/>
</dbReference>
<dbReference type="InterPro" id="IPR048641">
    <property type="entry name" value="RlmN_N"/>
</dbReference>
<dbReference type="InterPro" id="IPR027492">
    <property type="entry name" value="RNA_MTrfase_RlmN"/>
</dbReference>
<dbReference type="InterPro" id="IPR004383">
    <property type="entry name" value="rRNA_lsu_MTrfase_RlmN/Cfr"/>
</dbReference>
<dbReference type="InterPro" id="IPR007197">
    <property type="entry name" value="rSAM"/>
</dbReference>
<dbReference type="NCBIfam" id="TIGR00048">
    <property type="entry name" value="rRNA_mod_RlmN"/>
    <property type="match status" value="1"/>
</dbReference>
<dbReference type="PANTHER" id="PTHR30544">
    <property type="entry name" value="23S RRNA METHYLTRANSFERASE"/>
    <property type="match status" value="1"/>
</dbReference>
<dbReference type="PANTHER" id="PTHR30544:SF5">
    <property type="entry name" value="RADICAL SAM CORE DOMAIN-CONTAINING PROTEIN"/>
    <property type="match status" value="1"/>
</dbReference>
<dbReference type="Pfam" id="PF04055">
    <property type="entry name" value="Radical_SAM"/>
    <property type="match status" value="1"/>
</dbReference>
<dbReference type="Pfam" id="PF21016">
    <property type="entry name" value="RlmN_N"/>
    <property type="match status" value="1"/>
</dbReference>
<dbReference type="PIRSF" id="PIRSF006004">
    <property type="entry name" value="CHP00048"/>
    <property type="match status" value="1"/>
</dbReference>
<dbReference type="SFLD" id="SFLDF00275">
    <property type="entry name" value="adenosine_C2_methyltransferase"/>
    <property type="match status" value="1"/>
</dbReference>
<dbReference type="SFLD" id="SFLDS00029">
    <property type="entry name" value="Radical_SAM"/>
    <property type="match status" value="1"/>
</dbReference>
<dbReference type="SUPFAM" id="SSF102114">
    <property type="entry name" value="Radical SAM enzymes"/>
    <property type="match status" value="1"/>
</dbReference>
<dbReference type="PROSITE" id="PS51918">
    <property type="entry name" value="RADICAL_SAM"/>
    <property type="match status" value="1"/>
</dbReference>
<sequence>MSATPVTQLTPSSQPQQPCLPLLGASVTELTSWVQQQGQPAYRGKQLHDWIYHKGVRSLTDISVFSKQWRAAVADVPIGRSTIHHRSVASDGTVKYLLQLSDGEIVETVGIPTDKRLTVCVSTQVGCPMACDFCATGKGGYKRNLERHEIVDQVLTVQEDFQQRVSHVVFMGMGEPLLNTENVLAALRSLNQDVGIGQRSLTLSTVGIRDRISQLAEHHLQVTLAVSLHAPNQALREQLIPSARSYHIEDLLAECREYVAITGRRISFEYILLAGVNDLPEHALELSKHLRGFQNHVNLIPYNPISEVDYKRPSGDRIQAFLTVLQQQHIAVSVRYSRGLEADAACGQLRTKTSR</sequence>
<gene>
    <name evidence="1" type="primary">rlmN</name>
    <name type="ordered locus">Ava_2804</name>
</gene>